<comment type="function">
    <text evidence="1">NDH-1 shuttles electrons from NADH, via FMN and iron-sulfur (Fe-S) centers, to quinones in the respiratory chain. The immediate electron acceptor for the enzyme in this species is believed to be a menaquinone. Couples the redox reaction to proton translocation (for every two electrons transferred, four hydrogen ions are translocated across the cytoplasmic membrane), and thus conserves the redox energy in a proton gradient.</text>
</comment>
<comment type="catalytic activity">
    <reaction evidence="1">
        <text>a quinone + NADH + 5 H(+)(in) = a quinol + NAD(+) + 4 H(+)(out)</text>
        <dbReference type="Rhea" id="RHEA:57888"/>
        <dbReference type="ChEBI" id="CHEBI:15378"/>
        <dbReference type="ChEBI" id="CHEBI:24646"/>
        <dbReference type="ChEBI" id="CHEBI:57540"/>
        <dbReference type="ChEBI" id="CHEBI:57945"/>
        <dbReference type="ChEBI" id="CHEBI:132124"/>
    </reaction>
</comment>
<comment type="subunit">
    <text evidence="1">NDH-1 is composed of 14 different subunits. Subunits NuoA, H, J, K, L, M, N constitute the membrane sector of the complex.</text>
</comment>
<comment type="subcellular location">
    <subcellularLocation>
        <location evidence="1">Cell membrane</location>
        <topology evidence="1">Multi-pass membrane protein</topology>
    </subcellularLocation>
</comment>
<comment type="similarity">
    <text evidence="1">Belongs to the complex I subunit 2 family.</text>
</comment>
<dbReference type="EC" id="7.1.1.-" evidence="1"/>
<dbReference type="EMBL" id="CP000088">
    <property type="protein sequence ID" value="AAZ56715.1"/>
    <property type="molecule type" value="Genomic_DNA"/>
</dbReference>
<dbReference type="RefSeq" id="WP_011293105.1">
    <property type="nucleotide sequence ID" value="NC_007333.1"/>
</dbReference>
<dbReference type="SMR" id="Q47LF7"/>
<dbReference type="STRING" id="269800.Tfu_2682"/>
<dbReference type="KEGG" id="tfu:Tfu_2682"/>
<dbReference type="eggNOG" id="COG1007">
    <property type="taxonomic scope" value="Bacteria"/>
</dbReference>
<dbReference type="HOGENOM" id="CLU_007100_1_1_11"/>
<dbReference type="OrthoDB" id="9811718at2"/>
<dbReference type="GO" id="GO:0005886">
    <property type="term" value="C:plasma membrane"/>
    <property type="evidence" value="ECO:0007669"/>
    <property type="project" value="UniProtKB-SubCell"/>
</dbReference>
<dbReference type="GO" id="GO:0008137">
    <property type="term" value="F:NADH dehydrogenase (ubiquinone) activity"/>
    <property type="evidence" value="ECO:0007669"/>
    <property type="project" value="InterPro"/>
</dbReference>
<dbReference type="GO" id="GO:0050136">
    <property type="term" value="F:NADH:ubiquinone reductase (non-electrogenic) activity"/>
    <property type="evidence" value="ECO:0007669"/>
    <property type="project" value="UniProtKB-UniRule"/>
</dbReference>
<dbReference type="GO" id="GO:0048038">
    <property type="term" value="F:quinone binding"/>
    <property type="evidence" value="ECO:0007669"/>
    <property type="project" value="UniProtKB-KW"/>
</dbReference>
<dbReference type="GO" id="GO:0042773">
    <property type="term" value="P:ATP synthesis coupled electron transport"/>
    <property type="evidence" value="ECO:0007669"/>
    <property type="project" value="InterPro"/>
</dbReference>
<dbReference type="HAMAP" id="MF_00445">
    <property type="entry name" value="NDH1_NuoN_1"/>
    <property type="match status" value="1"/>
</dbReference>
<dbReference type="InterPro" id="IPR010096">
    <property type="entry name" value="NADH-Q_OxRdtase_suN/2"/>
</dbReference>
<dbReference type="InterPro" id="IPR001750">
    <property type="entry name" value="ND/Mrp_TM"/>
</dbReference>
<dbReference type="NCBIfam" id="TIGR01770">
    <property type="entry name" value="NDH_I_N"/>
    <property type="match status" value="1"/>
</dbReference>
<dbReference type="NCBIfam" id="NF004441">
    <property type="entry name" value="PRK05777.1-4"/>
    <property type="match status" value="1"/>
</dbReference>
<dbReference type="PANTHER" id="PTHR22773">
    <property type="entry name" value="NADH DEHYDROGENASE"/>
    <property type="match status" value="1"/>
</dbReference>
<dbReference type="Pfam" id="PF00361">
    <property type="entry name" value="Proton_antipo_M"/>
    <property type="match status" value="1"/>
</dbReference>
<evidence type="ECO:0000255" key="1">
    <source>
        <dbReference type="HAMAP-Rule" id="MF_00445"/>
    </source>
</evidence>
<keyword id="KW-1003">Cell membrane</keyword>
<keyword id="KW-0472">Membrane</keyword>
<keyword id="KW-0520">NAD</keyword>
<keyword id="KW-0874">Quinone</keyword>
<keyword id="KW-1278">Translocase</keyword>
<keyword id="KW-0812">Transmembrane</keyword>
<keyword id="KW-1133">Transmembrane helix</keyword>
<keyword id="KW-0813">Transport</keyword>
<gene>
    <name evidence="1" type="primary">nuoN</name>
    <name type="ordered locus">Tfu_2682</name>
</gene>
<proteinExistence type="inferred from homology"/>
<sequence>MIPLSLSETTLPTVTTQAPDLDYWLLSPLLVVFAAGVIGVIVEAFVPAQRRYSIQTALAMVAVGVAFVLTLVQVGALPADSAGLTLAFATVVVDRPSLFFQGVILALALASLLLIAERRDGESAFTGQAAAVPGSEEERAHVLAGSQHTEVYPLVMFAVLGMQLFTAANDFLTMFIALEVMSLPLYLLCGLARRRRLFSQEAALKYFLLGAFSSAFFLFGIAMVYGYAGAVEFAAVRAAGSSGGLIDGGEPLLLIGIAMIGVGMLFKVGTVPFHNWKPDVYQGAPTPITALMASGTLVAAFGAMLRVFYVAFGTTVAQWRPMLWVVAILTMVVAAVIAVTQRDIKRLLAYSSVVHAGFILTAVVAANADGLTGAMFYLAAYGFTTVGAFAIVTLVRNPDNGAEAGDLTQWAGLGRTSPFLAASLGLFLLAFAGIPLTSGFIGKFAVFEAAVAAGATPLVVVGVLSSAVTAFFYVRIIVLMFFAEPAENAPRVLKPGILTGTTVGLGVAATLLLGILPGPVLEHVIPQPAAETSEAVAAEHTAADSLFAR</sequence>
<reference key="1">
    <citation type="journal article" date="2007" name="J. Bacteriol.">
        <title>Genome sequence and analysis of the soil cellulolytic actinomycete Thermobifida fusca YX.</title>
        <authorList>
            <person name="Lykidis A."/>
            <person name="Mavromatis K."/>
            <person name="Ivanova N."/>
            <person name="Anderson I."/>
            <person name="Land M."/>
            <person name="DiBartolo G."/>
            <person name="Martinez M."/>
            <person name="Lapidus A."/>
            <person name="Lucas S."/>
            <person name="Copeland A."/>
            <person name="Richardson P."/>
            <person name="Wilson D.B."/>
            <person name="Kyrpides N."/>
        </authorList>
    </citation>
    <scope>NUCLEOTIDE SEQUENCE [LARGE SCALE GENOMIC DNA]</scope>
    <source>
        <strain>YX</strain>
    </source>
</reference>
<accession>Q47LF7</accession>
<name>NUON_THEFY</name>
<feature type="chain" id="PRO_0000391238" description="NADH-quinone oxidoreductase subunit N">
    <location>
        <begin position="1"/>
        <end position="549"/>
    </location>
</feature>
<feature type="transmembrane region" description="Helical" evidence="1">
    <location>
        <begin position="26"/>
        <end position="46"/>
    </location>
</feature>
<feature type="transmembrane region" description="Helical" evidence="1">
    <location>
        <begin position="57"/>
        <end position="77"/>
    </location>
</feature>
<feature type="transmembrane region" description="Helical" evidence="1">
    <location>
        <begin position="96"/>
        <end position="116"/>
    </location>
</feature>
<feature type="transmembrane region" description="Helical" evidence="1">
    <location>
        <begin position="148"/>
        <end position="168"/>
    </location>
</feature>
<feature type="transmembrane region" description="Helical" evidence="1">
    <location>
        <begin position="171"/>
        <end position="191"/>
    </location>
</feature>
<feature type="transmembrane region" description="Helical" evidence="1">
    <location>
        <begin position="206"/>
        <end position="226"/>
    </location>
</feature>
<feature type="transmembrane region" description="Helical" evidence="1">
    <location>
        <begin position="253"/>
        <end position="273"/>
    </location>
</feature>
<feature type="transmembrane region" description="Helical" evidence="1">
    <location>
        <begin position="297"/>
        <end position="317"/>
    </location>
</feature>
<feature type="transmembrane region" description="Helical" evidence="1">
    <location>
        <begin position="321"/>
        <end position="341"/>
    </location>
</feature>
<feature type="transmembrane region" description="Helical" evidence="1">
    <location>
        <begin position="347"/>
        <end position="367"/>
    </location>
</feature>
<feature type="transmembrane region" description="Helical" evidence="1">
    <location>
        <begin position="375"/>
        <end position="395"/>
    </location>
</feature>
<feature type="transmembrane region" description="Helical" evidence="1">
    <location>
        <begin position="421"/>
        <end position="441"/>
    </location>
</feature>
<feature type="transmembrane region" description="Helical" evidence="1">
    <location>
        <begin position="466"/>
        <end position="486"/>
    </location>
</feature>
<feature type="transmembrane region" description="Helical" evidence="1">
    <location>
        <begin position="496"/>
        <end position="516"/>
    </location>
</feature>
<protein>
    <recommendedName>
        <fullName evidence="1">NADH-quinone oxidoreductase subunit N</fullName>
        <ecNumber evidence="1">7.1.1.-</ecNumber>
    </recommendedName>
    <alternativeName>
        <fullName evidence="1">NADH dehydrogenase I subunit N</fullName>
    </alternativeName>
    <alternativeName>
        <fullName evidence="1">NDH-1 subunit N</fullName>
    </alternativeName>
</protein>
<organism>
    <name type="scientific">Thermobifida fusca (strain YX)</name>
    <dbReference type="NCBI Taxonomy" id="269800"/>
    <lineage>
        <taxon>Bacteria</taxon>
        <taxon>Bacillati</taxon>
        <taxon>Actinomycetota</taxon>
        <taxon>Actinomycetes</taxon>
        <taxon>Streptosporangiales</taxon>
        <taxon>Nocardiopsidaceae</taxon>
        <taxon>Thermobifida</taxon>
    </lineage>
</organism>